<comment type="function">
    <text evidence="1">Stabilizes the atg5-atg12 conjugate which is necessary for autophagy. The atg5-atg12/atg16 complex is required for efficient promotion of ATG8-conjugation to phosphatidylethanolamine and ATG8 localization to the pre-autophagosomal structure (PAS). Also recruits ATG3 to the PAS. Involved in endoplasmic reticulum-specific autophagic process and is essential for the survival of cells subjected to severe ER stress (By similarity).</text>
</comment>
<comment type="subunit">
    <text evidence="1">Homodimer (By similarity). Part of the atg5-atg12/atg16 complex. Several units of each may be present in this complex (By similarity).</text>
</comment>
<comment type="subcellular location">
    <subcellularLocation>
        <location evidence="2">Preautophagosomal structure membrane</location>
        <topology evidence="2">Peripheral membrane protein</topology>
    </subcellularLocation>
</comment>
<comment type="similarity">
    <text evidence="5">Belongs to the ATG16 family.</text>
</comment>
<accession>Q5BH90</accession>
<accession>C8VQY6</accession>
<feature type="chain" id="PRO_0000218591" description="Autophagy protein 16">
    <location>
        <begin position="1"/>
        <end position="202"/>
    </location>
</feature>
<feature type="region of interest" description="Disordered" evidence="4">
    <location>
        <begin position="52"/>
        <end position="76"/>
    </location>
</feature>
<feature type="coiled-coil region" evidence="3">
    <location>
        <begin position="78"/>
        <end position="186"/>
    </location>
</feature>
<feature type="compositionally biased region" description="Low complexity" evidence="4">
    <location>
        <begin position="64"/>
        <end position="76"/>
    </location>
</feature>
<sequence length="202" mass="23118">MAHWREEYAAALAARDRREKANVAIYNAYSQLADRTASSMIAVSDLQSDAQRSALSTPVADPRQQQPSPASGPSPQDIILAIRADLAEAQRSRSELEEQLARVTTELEKLRRRNIQNGKRISSMESEITHLQLRLKDRDEELREKAKLLEGFQDEIATFELQLNMAEERSNRLQKENQELIDRWMARMGKEADAMNDAYQFS</sequence>
<reference key="1">
    <citation type="journal article" date="2005" name="Nature">
        <title>Sequencing of Aspergillus nidulans and comparative analysis with A. fumigatus and A. oryzae.</title>
        <authorList>
            <person name="Galagan J.E."/>
            <person name="Calvo S.E."/>
            <person name="Cuomo C."/>
            <person name="Ma L.-J."/>
            <person name="Wortman J.R."/>
            <person name="Batzoglou S."/>
            <person name="Lee S.-I."/>
            <person name="Bastuerkmen M."/>
            <person name="Spevak C.C."/>
            <person name="Clutterbuck J."/>
            <person name="Kapitonov V."/>
            <person name="Jurka J."/>
            <person name="Scazzocchio C."/>
            <person name="Farman M.L."/>
            <person name="Butler J."/>
            <person name="Purcell S."/>
            <person name="Harris S."/>
            <person name="Braus G.H."/>
            <person name="Draht O."/>
            <person name="Busch S."/>
            <person name="D'Enfert C."/>
            <person name="Bouchier C."/>
            <person name="Goldman G.H."/>
            <person name="Bell-Pedersen D."/>
            <person name="Griffiths-Jones S."/>
            <person name="Doonan J.H."/>
            <person name="Yu J."/>
            <person name="Vienken K."/>
            <person name="Pain A."/>
            <person name="Freitag M."/>
            <person name="Selker E.U."/>
            <person name="Archer D.B."/>
            <person name="Penalva M.A."/>
            <person name="Oakley B.R."/>
            <person name="Momany M."/>
            <person name="Tanaka T."/>
            <person name="Kumagai T."/>
            <person name="Asai K."/>
            <person name="Machida M."/>
            <person name="Nierman W.C."/>
            <person name="Denning D.W."/>
            <person name="Caddick M.X."/>
            <person name="Hynes M."/>
            <person name="Paoletti M."/>
            <person name="Fischer R."/>
            <person name="Miller B.L."/>
            <person name="Dyer P.S."/>
            <person name="Sachs M.S."/>
            <person name="Osmani S.A."/>
            <person name="Birren B.W."/>
        </authorList>
    </citation>
    <scope>NUCLEOTIDE SEQUENCE [LARGE SCALE GENOMIC DNA]</scope>
    <source>
        <strain>FGSC A4 / ATCC 38163 / CBS 112.46 / NRRL 194 / M139</strain>
    </source>
</reference>
<reference key="2">
    <citation type="journal article" date="2009" name="Fungal Genet. Biol.">
        <title>The 2008 update of the Aspergillus nidulans genome annotation: a community effort.</title>
        <authorList>
            <person name="Wortman J.R."/>
            <person name="Gilsenan J.M."/>
            <person name="Joardar V."/>
            <person name="Deegan J."/>
            <person name="Clutterbuck J."/>
            <person name="Andersen M.R."/>
            <person name="Archer D."/>
            <person name="Bencina M."/>
            <person name="Braus G."/>
            <person name="Coutinho P."/>
            <person name="von Dohren H."/>
            <person name="Doonan J."/>
            <person name="Driessen A.J."/>
            <person name="Durek P."/>
            <person name="Espeso E."/>
            <person name="Fekete E."/>
            <person name="Flipphi M."/>
            <person name="Estrada C.G."/>
            <person name="Geysens S."/>
            <person name="Goldman G."/>
            <person name="de Groot P.W."/>
            <person name="Hansen K."/>
            <person name="Harris S.D."/>
            <person name="Heinekamp T."/>
            <person name="Helmstaedt K."/>
            <person name="Henrissat B."/>
            <person name="Hofmann G."/>
            <person name="Homan T."/>
            <person name="Horio T."/>
            <person name="Horiuchi H."/>
            <person name="James S."/>
            <person name="Jones M."/>
            <person name="Karaffa L."/>
            <person name="Karanyi Z."/>
            <person name="Kato M."/>
            <person name="Keller N."/>
            <person name="Kelly D.E."/>
            <person name="Kiel J.A."/>
            <person name="Kim J.M."/>
            <person name="van der Klei I.J."/>
            <person name="Klis F.M."/>
            <person name="Kovalchuk A."/>
            <person name="Krasevec N."/>
            <person name="Kubicek C.P."/>
            <person name="Liu B."/>
            <person name="Maccabe A."/>
            <person name="Meyer V."/>
            <person name="Mirabito P."/>
            <person name="Miskei M."/>
            <person name="Mos M."/>
            <person name="Mullins J."/>
            <person name="Nelson D.R."/>
            <person name="Nielsen J."/>
            <person name="Oakley B.R."/>
            <person name="Osmani S.A."/>
            <person name="Pakula T."/>
            <person name="Paszewski A."/>
            <person name="Paulsen I."/>
            <person name="Pilsyk S."/>
            <person name="Pocsi I."/>
            <person name="Punt P.J."/>
            <person name="Ram A.F."/>
            <person name="Ren Q."/>
            <person name="Robellet X."/>
            <person name="Robson G."/>
            <person name="Seiboth B."/>
            <person name="van Solingen P."/>
            <person name="Specht T."/>
            <person name="Sun J."/>
            <person name="Taheri-Talesh N."/>
            <person name="Takeshita N."/>
            <person name="Ussery D."/>
            <person name="vanKuyk P.A."/>
            <person name="Visser H."/>
            <person name="van de Vondervoort P.J."/>
            <person name="de Vries R.P."/>
            <person name="Walton J."/>
            <person name="Xiang X."/>
            <person name="Xiong Y."/>
            <person name="Zeng A.P."/>
            <person name="Brandt B.W."/>
            <person name="Cornell M.J."/>
            <person name="van den Hondel C.A."/>
            <person name="Visser J."/>
            <person name="Oliver S.G."/>
            <person name="Turner G."/>
        </authorList>
    </citation>
    <scope>GENOME REANNOTATION</scope>
    <source>
        <strain>FGSC A4 / ATCC 38163 / CBS 112.46 / NRRL 194 / M139</strain>
    </source>
</reference>
<keyword id="KW-0072">Autophagy</keyword>
<keyword id="KW-0175">Coiled coil</keyword>
<keyword id="KW-0472">Membrane</keyword>
<keyword id="KW-0653">Protein transport</keyword>
<keyword id="KW-1185">Reference proteome</keyword>
<keyword id="KW-0813">Transport</keyword>
<proteinExistence type="inferred from homology"/>
<protein>
    <recommendedName>
        <fullName>Autophagy protein 16</fullName>
    </recommendedName>
</protein>
<name>ATG16_EMENI</name>
<dbReference type="EMBL" id="AACD01000003">
    <property type="protein sequence ID" value="EAA65268.1"/>
    <property type="molecule type" value="Genomic_DNA"/>
</dbReference>
<dbReference type="EMBL" id="BN001308">
    <property type="protein sequence ID" value="CBF90220.1"/>
    <property type="molecule type" value="Genomic_DNA"/>
</dbReference>
<dbReference type="RefSeq" id="XP_657694.1">
    <property type="nucleotide sequence ID" value="XM_652602.1"/>
</dbReference>
<dbReference type="SMR" id="Q5BH90"/>
<dbReference type="STRING" id="227321.Q5BH90"/>
<dbReference type="EnsemblFungi" id="CBF90220">
    <property type="protein sequence ID" value="CBF90220"/>
    <property type="gene ID" value="ANIA_00090"/>
</dbReference>
<dbReference type="KEGG" id="ani:ANIA_00090"/>
<dbReference type="VEuPathDB" id="FungiDB:AN0090"/>
<dbReference type="eggNOG" id="ENOG502S5CU">
    <property type="taxonomic scope" value="Eukaryota"/>
</dbReference>
<dbReference type="HOGENOM" id="CLU_082752_0_0_1"/>
<dbReference type="InParanoid" id="Q5BH90"/>
<dbReference type="OMA" id="VQACSQM"/>
<dbReference type="OrthoDB" id="8949486at2759"/>
<dbReference type="Proteomes" id="UP000000560">
    <property type="component" value="Chromosome VIII"/>
</dbReference>
<dbReference type="GO" id="GO:0034045">
    <property type="term" value="C:phagophore assembly site membrane"/>
    <property type="evidence" value="ECO:0007669"/>
    <property type="project" value="UniProtKB-SubCell"/>
</dbReference>
<dbReference type="GO" id="GO:0006914">
    <property type="term" value="P:autophagy"/>
    <property type="evidence" value="ECO:0007669"/>
    <property type="project" value="UniProtKB-KW"/>
</dbReference>
<dbReference type="GO" id="GO:0015031">
    <property type="term" value="P:protein transport"/>
    <property type="evidence" value="ECO:0007669"/>
    <property type="project" value="UniProtKB-KW"/>
</dbReference>
<dbReference type="CDD" id="cd22887">
    <property type="entry name" value="Atg16_CCD"/>
    <property type="match status" value="1"/>
</dbReference>
<dbReference type="Gene3D" id="1.20.5.170">
    <property type="match status" value="1"/>
</dbReference>
<dbReference type="InterPro" id="IPR013923">
    <property type="entry name" value="Autophagy-rel_prot_16_dom"/>
</dbReference>
<dbReference type="Pfam" id="PF08614">
    <property type="entry name" value="ATG16"/>
    <property type="match status" value="1"/>
</dbReference>
<gene>
    <name type="primary">atg16</name>
    <name type="ORF">AN0090</name>
</gene>
<organism>
    <name type="scientific">Emericella nidulans (strain FGSC A4 / ATCC 38163 / CBS 112.46 / NRRL 194 / M139)</name>
    <name type="common">Aspergillus nidulans</name>
    <dbReference type="NCBI Taxonomy" id="227321"/>
    <lineage>
        <taxon>Eukaryota</taxon>
        <taxon>Fungi</taxon>
        <taxon>Dikarya</taxon>
        <taxon>Ascomycota</taxon>
        <taxon>Pezizomycotina</taxon>
        <taxon>Eurotiomycetes</taxon>
        <taxon>Eurotiomycetidae</taxon>
        <taxon>Eurotiales</taxon>
        <taxon>Aspergillaceae</taxon>
        <taxon>Aspergillus</taxon>
        <taxon>Aspergillus subgen. Nidulantes</taxon>
    </lineage>
</organism>
<evidence type="ECO:0000250" key="1"/>
<evidence type="ECO:0000250" key="2">
    <source>
        <dbReference type="UniProtKB" id="Q03818"/>
    </source>
</evidence>
<evidence type="ECO:0000255" key="3"/>
<evidence type="ECO:0000256" key="4">
    <source>
        <dbReference type="SAM" id="MobiDB-lite"/>
    </source>
</evidence>
<evidence type="ECO:0000305" key="5"/>